<sequence length="435" mass="47322">MTSMILAVFIFLLTLVLVIWQPKNLSIGWSACGGAVLALIAGVVNFHDVLTVTGIVWNATLAFVAIILISLILDNIGFFEWAALHMAKAAKGYGVRMFVYVSLLGAIVAALFANDGAALILTPIVLAMVRALHFNEKLVFPFIIASGFIADTTSLPFVVSNLVNIVSADYFHITFIDYASRMVVPYLFSLLASIIVLYLFFRKSIPKRYDLTEVKKPVEAIKDQNMFRLSWYILGLLLIGYFASEFFSIPVSVVAGSIAIIFLIAAQKSPAVHTKKVVKEAPWAIVFFSIGMYVVVYGVRNAGLTDVLSDVIQAAADQGLFAGTIGMGFIAAILSSIMNNLPTVMIDALAIAGTDTHGMMREALIYANVIGSDLGPKITPIGSLATLLWLHVLSHKGMKISWGTYFKTGIILTIPTLLITLVGLYIWLLIIHSCF</sequence>
<feature type="chain" id="PRO_0000376838" description="Putative arsenical pump membrane protein YdfA">
    <location>
        <begin position="1"/>
        <end position="435"/>
    </location>
</feature>
<feature type="transmembrane region" description="Helical" evidence="1">
    <location>
        <begin position="1"/>
        <end position="21"/>
    </location>
</feature>
<feature type="transmembrane region" description="Helical" evidence="1">
    <location>
        <begin position="26"/>
        <end position="46"/>
    </location>
</feature>
<feature type="transmembrane region" description="Helical" evidence="1">
    <location>
        <begin position="52"/>
        <end position="72"/>
    </location>
</feature>
<feature type="transmembrane region" description="Helical" evidence="1">
    <location>
        <begin position="92"/>
        <end position="113"/>
    </location>
</feature>
<feature type="transmembrane region" description="Helical" evidence="1">
    <location>
        <begin position="117"/>
        <end position="134"/>
    </location>
</feature>
<feature type="transmembrane region" description="Helical" evidence="1">
    <location>
        <begin position="139"/>
        <end position="159"/>
    </location>
</feature>
<feature type="transmembrane region" description="Helical" evidence="1">
    <location>
        <begin position="181"/>
        <end position="201"/>
    </location>
</feature>
<feature type="transmembrane region" description="Helical" evidence="1">
    <location>
        <begin position="225"/>
        <end position="245"/>
    </location>
</feature>
<feature type="transmembrane region" description="Helical" evidence="1">
    <location>
        <begin position="246"/>
        <end position="266"/>
    </location>
</feature>
<feature type="transmembrane region" description="Helical" evidence="1">
    <location>
        <begin position="277"/>
        <end position="297"/>
    </location>
</feature>
<feature type="transmembrane region" description="Helical" evidence="1">
    <location>
        <begin position="319"/>
        <end position="339"/>
    </location>
</feature>
<feature type="transmembrane region" description="Helical" evidence="1">
    <location>
        <begin position="410"/>
        <end position="430"/>
    </location>
</feature>
<keyword id="KW-0059">Arsenical resistance</keyword>
<keyword id="KW-1003">Cell membrane</keyword>
<keyword id="KW-0472">Membrane</keyword>
<keyword id="KW-1185">Reference proteome</keyword>
<keyword id="KW-0812">Transmembrane</keyword>
<keyword id="KW-1133">Transmembrane helix</keyword>
<protein>
    <recommendedName>
        <fullName>Putative arsenical pump membrane protein YdfA</fullName>
    </recommendedName>
</protein>
<gene>
    <name type="primary">ydfA</name>
    <name type="ordered locus">BSU05340</name>
</gene>
<organism>
    <name type="scientific">Bacillus subtilis (strain 168)</name>
    <dbReference type="NCBI Taxonomy" id="224308"/>
    <lineage>
        <taxon>Bacteria</taxon>
        <taxon>Bacillati</taxon>
        <taxon>Bacillota</taxon>
        <taxon>Bacilli</taxon>
        <taxon>Bacillales</taxon>
        <taxon>Bacillaceae</taxon>
        <taxon>Bacillus</taxon>
    </lineage>
</organism>
<comment type="subcellular location">
    <subcellularLocation>
        <location evidence="2">Cell membrane</location>
        <topology evidence="2">Multi-pass membrane protein</topology>
    </subcellularLocation>
</comment>
<comment type="similarity">
    <text evidence="2">Belongs to the ArsB family.</text>
</comment>
<reference key="1">
    <citation type="submission" date="1997-03" db="EMBL/GenBank/DDBJ databases">
        <title>A 148 kbp sequence of the region between 35 and 47 degree of the Bacillus subtilis genome.</title>
        <authorList>
            <person name="Kasahara Y."/>
            <person name="Nakai S."/>
            <person name="Lee S."/>
            <person name="Sadaie Y."/>
            <person name="Ogasawara N."/>
        </authorList>
    </citation>
    <scope>NUCLEOTIDE SEQUENCE [GENOMIC DNA]</scope>
    <source>
        <strain>168</strain>
    </source>
</reference>
<reference key="2">
    <citation type="journal article" date="1997" name="Nature">
        <title>The complete genome sequence of the Gram-positive bacterium Bacillus subtilis.</title>
        <authorList>
            <person name="Kunst F."/>
            <person name="Ogasawara N."/>
            <person name="Moszer I."/>
            <person name="Albertini A.M."/>
            <person name="Alloni G."/>
            <person name="Azevedo V."/>
            <person name="Bertero M.G."/>
            <person name="Bessieres P."/>
            <person name="Bolotin A."/>
            <person name="Borchert S."/>
            <person name="Borriss R."/>
            <person name="Boursier L."/>
            <person name="Brans A."/>
            <person name="Braun M."/>
            <person name="Brignell S.C."/>
            <person name="Bron S."/>
            <person name="Brouillet S."/>
            <person name="Bruschi C.V."/>
            <person name="Caldwell B."/>
            <person name="Capuano V."/>
            <person name="Carter N.M."/>
            <person name="Choi S.-K."/>
            <person name="Codani J.-J."/>
            <person name="Connerton I.F."/>
            <person name="Cummings N.J."/>
            <person name="Daniel R.A."/>
            <person name="Denizot F."/>
            <person name="Devine K.M."/>
            <person name="Duesterhoeft A."/>
            <person name="Ehrlich S.D."/>
            <person name="Emmerson P.T."/>
            <person name="Entian K.-D."/>
            <person name="Errington J."/>
            <person name="Fabret C."/>
            <person name="Ferrari E."/>
            <person name="Foulger D."/>
            <person name="Fritz C."/>
            <person name="Fujita M."/>
            <person name="Fujita Y."/>
            <person name="Fuma S."/>
            <person name="Galizzi A."/>
            <person name="Galleron N."/>
            <person name="Ghim S.-Y."/>
            <person name="Glaser P."/>
            <person name="Goffeau A."/>
            <person name="Golightly E.J."/>
            <person name="Grandi G."/>
            <person name="Guiseppi G."/>
            <person name="Guy B.J."/>
            <person name="Haga K."/>
            <person name="Haiech J."/>
            <person name="Harwood C.R."/>
            <person name="Henaut A."/>
            <person name="Hilbert H."/>
            <person name="Holsappel S."/>
            <person name="Hosono S."/>
            <person name="Hullo M.-F."/>
            <person name="Itaya M."/>
            <person name="Jones L.-M."/>
            <person name="Joris B."/>
            <person name="Karamata D."/>
            <person name="Kasahara Y."/>
            <person name="Klaerr-Blanchard M."/>
            <person name="Klein C."/>
            <person name="Kobayashi Y."/>
            <person name="Koetter P."/>
            <person name="Koningstein G."/>
            <person name="Krogh S."/>
            <person name="Kumano M."/>
            <person name="Kurita K."/>
            <person name="Lapidus A."/>
            <person name="Lardinois S."/>
            <person name="Lauber J."/>
            <person name="Lazarevic V."/>
            <person name="Lee S.-M."/>
            <person name="Levine A."/>
            <person name="Liu H."/>
            <person name="Masuda S."/>
            <person name="Mauel C."/>
            <person name="Medigue C."/>
            <person name="Medina N."/>
            <person name="Mellado R.P."/>
            <person name="Mizuno M."/>
            <person name="Moestl D."/>
            <person name="Nakai S."/>
            <person name="Noback M."/>
            <person name="Noone D."/>
            <person name="O'Reilly M."/>
            <person name="Ogawa K."/>
            <person name="Ogiwara A."/>
            <person name="Oudega B."/>
            <person name="Park S.-H."/>
            <person name="Parro V."/>
            <person name="Pohl T.M."/>
            <person name="Portetelle D."/>
            <person name="Porwollik S."/>
            <person name="Prescott A.M."/>
            <person name="Presecan E."/>
            <person name="Pujic P."/>
            <person name="Purnelle B."/>
            <person name="Rapoport G."/>
            <person name="Rey M."/>
            <person name="Reynolds S."/>
            <person name="Rieger M."/>
            <person name="Rivolta C."/>
            <person name="Rocha E."/>
            <person name="Roche B."/>
            <person name="Rose M."/>
            <person name="Sadaie Y."/>
            <person name="Sato T."/>
            <person name="Scanlan E."/>
            <person name="Schleich S."/>
            <person name="Schroeter R."/>
            <person name="Scoffone F."/>
            <person name="Sekiguchi J."/>
            <person name="Sekowska A."/>
            <person name="Seror S.J."/>
            <person name="Serror P."/>
            <person name="Shin B.-S."/>
            <person name="Soldo B."/>
            <person name="Sorokin A."/>
            <person name="Tacconi E."/>
            <person name="Takagi T."/>
            <person name="Takahashi H."/>
            <person name="Takemaru K."/>
            <person name="Takeuchi M."/>
            <person name="Tamakoshi A."/>
            <person name="Tanaka T."/>
            <person name="Terpstra P."/>
            <person name="Tognoni A."/>
            <person name="Tosato V."/>
            <person name="Uchiyama S."/>
            <person name="Vandenbol M."/>
            <person name="Vannier F."/>
            <person name="Vassarotti A."/>
            <person name="Viari A."/>
            <person name="Wambutt R."/>
            <person name="Wedler E."/>
            <person name="Wedler H."/>
            <person name="Weitzenegger T."/>
            <person name="Winters P."/>
            <person name="Wipat A."/>
            <person name="Yamamoto H."/>
            <person name="Yamane K."/>
            <person name="Yasumoto K."/>
            <person name="Yata K."/>
            <person name="Yoshida K."/>
            <person name="Yoshikawa H.-F."/>
            <person name="Zumstein E."/>
            <person name="Yoshikawa H."/>
            <person name="Danchin A."/>
        </authorList>
    </citation>
    <scope>NUCLEOTIDE SEQUENCE [LARGE SCALE GENOMIC DNA]</scope>
    <source>
        <strain>168</strain>
    </source>
</reference>
<proteinExistence type="inferred from homology"/>
<evidence type="ECO:0000255" key="1"/>
<evidence type="ECO:0000305" key="2"/>
<name>YDFA_BACSU</name>
<accession>P96678</accession>
<accession>Q797H2</accession>
<dbReference type="EMBL" id="AB001488">
    <property type="protein sequence ID" value="BAA19368.1"/>
    <property type="molecule type" value="Genomic_DNA"/>
</dbReference>
<dbReference type="EMBL" id="AL009126">
    <property type="protein sequence ID" value="CAB12341.1"/>
    <property type="molecule type" value="Genomic_DNA"/>
</dbReference>
<dbReference type="PIR" id="G69779">
    <property type="entry name" value="G69779"/>
</dbReference>
<dbReference type="RefSeq" id="WP_003243030.1">
    <property type="nucleotide sequence ID" value="NZ_OZ025638.1"/>
</dbReference>
<dbReference type="SMR" id="P96678"/>
<dbReference type="FunCoup" id="P96678">
    <property type="interactions" value="440"/>
</dbReference>
<dbReference type="STRING" id="224308.BSU05340"/>
<dbReference type="PaxDb" id="224308-BSU05340"/>
<dbReference type="EnsemblBacteria" id="CAB12341">
    <property type="protein sequence ID" value="CAB12341"/>
    <property type="gene ID" value="BSU_05340"/>
</dbReference>
<dbReference type="GeneID" id="939905"/>
<dbReference type="KEGG" id="bsu:BSU05340"/>
<dbReference type="PATRIC" id="fig|224308.179.peg.570"/>
<dbReference type="eggNOG" id="COG1055">
    <property type="taxonomic scope" value="Bacteria"/>
</dbReference>
<dbReference type="InParanoid" id="P96678"/>
<dbReference type="OrthoDB" id="9774335at2"/>
<dbReference type="PhylomeDB" id="P96678"/>
<dbReference type="BioCyc" id="BSUB:BSU05340-MONOMER"/>
<dbReference type="Proteomes" id="UP000001570">
    <property type="component" value="Chromosome"/>
</dbReference>
<dbReference type="GO" id="GO:0005886">
    <property type="term" value="C:plasma membrane"/>
    <property type="evidence" value="ECO:0000318"/>
    <property type="project" value="GO_Central"/>
</dbReference>
<dbReference type="GO" id="GO:0015105">
    <property type="term" value="F:arsenite transmembrane transporter activity"/>
    <property type="evidence" value="ECO:0007669"/>
    <property type="project" value="InterPro"/>
</dbReference>
<dbReference type="GO" id="GO:0046685">
    <property type="term" value="P:response to arsenic-containing substance"/>
    <property type="evidence" value="ECO:0007669"/>
    <property type="project" value="UniProtKB-KW"/>
</dbReference>
<dbReference type="CDD" id="cd01118">
    <property type="entry name" value="ArsB_permease"/>
    <property type="match status" value="1"/>
</dbReference>
<dbReference type="InterPro" id="IPR000802">
    <property type="entry name" value="Arsenical_pump_ArsB"/>
</dbReference>
<dbReference type="NCBIfam" id="TIGR00935">
    <property type="entry name" value="2a45"/>
    <property type="match status" value="1"/>
</dbReference>
<dbReference type="NCBIfam" id="NF011980">
    <property type="entry name" value="PRK15445.1"/>
    <property type="match status" value="1"/>
</dbReference>
<dbReference type="PANTHER" id="PTHR43302">
    <property type="entry name" value="TRANSPORTER ARSB-RELATED"/>
    <property type="match status" value="1"/>
</dbReference>
<dbReference type="PANTHER" id="PTHR43302:SF5">
    <property type="entry name" value="TRANSPORTER ARSB-RELATED"/>
    <property type="match status" value="1"/>
</dbReference>
<dbReference type="Pfam" id="PF02040">
    <property type="entry name" value="ArsB"/>
    <property type="match status" value="1"/>
</dbReference>
<dbReference type="PRINTS" id="PR00758">
    <property type="entry name" value="ARSENICPUMP"/>
</dbReference>